<proteinExistence type="inferred from homology"/>
<sequence length="75" mass="8975">MKNKPDDRRDNVDKIQYNITKTIQNCELADEMIAKTDDEKTKKTLIEKNQRRREALDGMREEIKDEARDKKNGYM</sequence>
<dbReference type="EMBL" id="CP001083">
    <property type="protein sequence ID" value="ACQ51850.1"/>
    <property type="molecule type" value="Genomic_DNA"/>
</dbReference>
<dbReference type="RefSeq" id="WP_003360992.1">
    <property type="nucleotide sequence ID" value="NC_012658.1"/>
</dbReference>
<dbReference type="SMR" id="C3L3A3"/>
<dbReference type="KEGG" id="cbi:CLJ_B1081"/>
<dbReference type="HOGENOM" id="CLU_178266_1_1_9"/>
<dbReference type="Proteomes" id="UP000002333">
    <property type="component" value="Chromosome"/>
</dbReference>
<dbReference type="HAMAP" id="MF_01506">
    <property type="entry name" value="Tlp"/>
    <property type="match status" value="1"/>
</dbReference>
<dbReference type="InterPro" id="IPR017524">
    <property type="entry name" value="SASP_thioredoxin-like"/>
</dbReference>
<dbReference type="NCBIfam" id="TIGR03090">
    <property type="entry name" value="SASP_tlp"/>
    <property type="match status" value="1"/>
</dbReference>
<dbReference type="Pfam" id="PF19824">
    <property type="entry name" value="Tlp"/>
    <property type="match status" value="1"/>
</dbReference>
<evidence type="ECO:0000255" key="1">
    <source>
        <dbReference type="HAMAP-Rule" id="MF_01506"/>
    </source>
</evidence>
<evidence type="ECO:0000256" key="2">
    <source>
        <dbReference type="SAM" id="MobiDB-lite"/>
    </source>
</evidence>
<gene>
    <name evidence="1" type="primary">tlp</name>
    <name type="ordered locus">CLJ_B1081</name>
</gene>
<name>TLP_CLOB6</name>
<reference key="1">
    <citation type="submission" date="2008-05" db="EMBL/GenBank/DDBJ databases">
        <title>Genome sequence of Clostridium botulinum Ba4 strain 657.</title>
        <authorList>
            <person name="Shrivastava S."/>
            <person name="Brown J.L."/>
            <person name="Bruce D."/>
            <person name="Detter C."/>
            <person name="Munk C."/>
            <person name="Smith L.A."/>
            <person name="Smith T.J."/>
            <person name="Sutton G."/>
            <person name="Brettin T.S."/>
        </authorList>
    </citation>
    <scope>NUCLEOTIDE SEQUENCE [LARGE SCALE GENOMIC DNA]</scope>
    <source>
        <strain>657 / Type Ba4</strain>
    </source>
</reference>
<comment type="similarity">
    <text evidence="1">Belongs to the Tlp family.</text>
</comment>
<organism>
    <name type="scientific">Clostridium botulinum (strain 657 / Type Ba4)</name>
    <dbReference type="NCBI Taxonomy" id="515621"/>
    <lineage>
        <taxon>Bacteria</taxon>
        <taxon>Bacillati</taxon>
        <taxon>Bacillota</taxon>
        <taxon>Clostridia</taxon>
        <taxon>Eubacteriales</taxon>
        <taxon>Clostridiaceae</taxon>
        <taxon>Clostridium</taxon>
    </lineage>
</organism>
<protein>
    <recommendedName>
        <fullName evidence="1">Protein Tlp homolog</fullName>
    </recommendedName>
</protein>
<feature type="chain" id="PRO_1000215332" description="Protein Tlp homolog">
    <location>
        <begin position="1"/>
        <end position="75"/>
    </location>
</feature>
<feature type="region of interest" description="Disordered" evidence="2">
    <location>
        <begin position="48"/>
        <end position="75"/>
    </location>
</feature>
<accession>C3L3A3</accession>